<keyword id="KW-0963">Cytoplasm</keyword>
<keyword id="KW-0233">DNA recombination</keyword>
<keyword id="KW-1185">Reference proteome</keyword>
<evidence type="ECO:0000255" key="1">
    <source>
        <dbReference type="HAMAP-Rule" id="MF_00194"/>
    </source>
</evidence>
<protein>
    <recommendedName>
        <fullName evidence="1">Recombination-associated protein RdgC</fullName>
    </recommendedName>
</protein>
<name>RDGC_BORPE</name>
<reference key="1">
    <citation type="journal article" date="2003" name="Nat. Genet.">
        <title>Comparative analysis of the genome sequences of Bordetella pertussis, Bordetella parapertussis and Bordetella bronchiseptica.</title>
        <authorList>
            <person name="Parkhill J."/>
            <person name="Sebaihia M."/>
            <person name="Preston A."/>
            <person name="Murphy L.D."/>
            <person name="Thomson N.R."/>
            <person name="Harris D.E."/>
            <person name="Holden M.T.G."/>
            <person name="Churcher C.M."/>
            <person name="Bentley S.D."/>
            <person name="Mungall K.L."/>
            <person name="Cerdeno-Tarraga A.-M."/>
            <person name="Temple L."/>
            <person name="James K.D."/>
            <person name="Harris B."/>
            <person name="Quail M.A."/>
            <person name="Achtman M."/>
            <person name="Atkin R."/>
            <person name="Baker S."/>
            <person name="Basham D."/>
            <person name="Bason N."/>
            <person name="Cherevach I."/>
            <person name="Chillingworth T."/>
            <person name="Collins M."/>
            <person name="Cronin A."/>
            <person name="Davis P."/>
            <person name="Doggett J."/>
            <person name="Feltwell T."/>
            <person name="Goble A."/>
            <person name="Hamlin N."/>
            <person name="Hauser H."/>
            <person name="Holroyd S."/>
            <person name="Jagels K."/>
            <person name="Leather S."/>
            <person name="Moule S."/>
            <person name="Norberczak H."/>
            <person name="O'Neil S."/>
            <person name="Ormond D."/>
            <person name="Price C."/>
            <person name="Rabbinowitsch E."/>
            <person name="Rutter S."/>
            <person name="Sanders M."/>
            <person name="Saunders D."/>
            <person name="Seeger K."/>
            <person name="Sharp S."/>
            <person name="Simmonds M."/>
            <person name="Skelton J."/>
            <person name="Squares R."/>
            <person name="Squares S."/>
            <person name="Stevens K."/>
            <person name="Unwin L."/>
            <person name="Whitehead S."/>
            <person name="Barrell B.G."/>
            <person name="Maskell D.J."/>
        </authorList>
    </citation>
    <scope>NUCLEOTIDE SEQUENCE [LARGE SCALE GENOMIC DNA]</scope>
    <source>
        <strain>Tohama I / ATCC BAA-589 / NCTC 13251</strain>
    </source>
</reference>
<feature type="chain" id="PRO_1000021204" description="Recombination-associated protein RdgC">
    <location>
        <begin position="1"/>
        <end position="299"/>
    </location>
</feature>
<comment type="function">
    <text evidence="1">May be involved in recombination.</text>
</comment>
<comment type="subcellular location">
    <subcellularLocation>
        <location evidence="1">Cytoplasm</location>
        <location evidence="1">Nucleoid</location>
    </subcellularLocation>
</comment>
<comment type="similarity">
    <text evidence="1">Belongs to the RdgC family.</text>
</comment>
<proteinExistence type="inferred from homology"/>
<gene>
    <name evidence="1" type="primary">rdgC</name>
    <name type="ordered locus">BP2561</name>
</gene>
<organism>
    <name type="scientific">Bordetella pertussis (strain Tohama I / ATCC BAA-589 / NCTC 13251)</name>
    <dbReference type="NCBI Taxonomy" id="257313"/>
    <lineage>
        <taxon>Bacteria</taxon>
        <taxon>Pseudomonadati</taxon>
        <taxon>Pseudomonadota</taxon>
        <taxon>Betaproteobacteria</taxon>
        <taxon>Burkholderiales</taxon>
        <taxon>Alcaligenaceae</taxon>
        <taxon>Bordetella</taxon>
    </lineage>
</organism>
<dbReference type="EMBL" id="BX640418">
    <property type="protein sequence ID" value="CAE42836.1"/>
    <property type="molecule type" value="Genomic_DNA"/>
</dbReference>
<dbReference type="RefSeq" id="NP_881188.1">
    <property type="nucleotide sequence ID" value="NC_002929.2"/>
</dbReference>
<dbReference type="RefSeq" id="WP_003812788.1">
    <property type="nucleotide sequence ID" value="NZ_CP039022.1"/>
</dbReference>
<dbReference type="SMR" id="Q7VVS6"/>
<dbReference type="STRING" id="257313.BP2561"/>
<dbReference type="PaxDb" id="257313-BP2561"/>
<dbReference type="KEGG" id="bpe:BP2561"/>
<dbReference type="PATRIC" id="fig|257313.5.peg.2761"/>
<dbReference type="eggNOG" id="COG2974">
    <property type="taxonomic scope" value="Bacteria"/>
</dbReference>
<dbReference type="HOGENOM" id="CLU_052038_0_1_4"/>
<dbReference type="Proteomes" id="UP000002676">
    <property type="component" value="Chromosome"/>
</dbReference>
<dbReference type="GO" id="GO:0043590">
    <property type="term" value="C:bacterial nucleoid"/>
    <property type="evidence" value="ECO:0007669"/>
    <property type="project" value="TreeGrafter"/>
</dbReference>
<dbReference type="GO" id="GO:0005737">
    <property type="term" value="C:cytoplasm"/>
    <property type="evidence" value="ECO:0007669"/>
    <property type="project" value="UniProtKB-UniRule"/>
</dbReference>
<dbReference type="GO" id="GO:0003690">
    <property type="term" value="F:double-stranded DNA binding"/>
    <property type="evidence" value="ECO:0007669"/>
    <property type="project" value="TreeGrafter"/>
</dbReference>
<dbReference type="GO" id="GO:0006310">
    <property type="term" value="P:DNA recombination"/>
    <property type="evidence" value="ECO:0007669"/>
    <property type="project" value="UniProtKB-UniRule"/>
</dbReference>
<dbReference type="GO" id="GO:0000018">
    <property type="term" value="P:regulation of DNA recombination"/>
    <property type="evidence" value="ECO:0007669"/>
    <property type="project" value="TreeGrafter"/>
</dbReference>
<dbReference type="HAMAP" id="MF_00194">
    <property type="entry name" value="RdgC"/>
    <property type="match status" value="1"/>
</dbReference>
<dbReference type="InterPro" id="IPR007476">
    <property type="entry name" value="RdgC"/>
</dbReference>
<dbReference type="NCBIfam" id="NF001463">
    <property type="entry name" value="PRK00321.1-4"/>
    <property type="match status" value="1"/>
</dbReference>
<dbReference type="NCBIfam" id="NF001464">
    <property type="entry name" value="PRK00321.1-5"/>
    <property type="match status" value="1"/>
</dbReference>
<dbReference type="PANTHER" id="PTHR38103">
    <property type="entry name" value="RECOMBINATION-ASSOCIATED PROTEIN RDGC"/>
    <property type="match status" value="1"/>
</dbReference>
<dbReference type="PANTHER" id="PTHR38103:SF1">
    <property type="entry name" value="RECOMBINATION-ASSOCIATED PROTEIN RDGC"/>
    <property type="match status" value="1"/>
</dbReference>
<dbReference type="Pfam" id="PF04381">
    <property type="entry name" value="RdgC"/>
    <property type="match status" value="1"/>
</dbReference>
<accession>Q7VVS6</accession>
<sequence length="299" mass="33503">MWFKNLKIYRLSAPWALNGDQLEECLARFAYQGGNNLEMQSLGWISPRENGLLAHTLNGQILLTLRAEKKLLPTTVVNQVAKARAQEIEEQQGYKPGRKQMKEIKERVTDELLPKAFSIYRDTRVWIDTVNHWLVIDAAASAKADEVIGLLVKTIDPLPLDNLYVEQSPAAAMTGWLAADEAPANFSIDQDTELRASGESRAAIRYVKHSIDVDDVRRHIQSGKQCTRLAMTWADRVSFVLTESLDVKRVAPLDVLKENPDAATQNDDEKFDSDMTLMTGEVAKLLAELVDSLGGEKRV</sequence>